<dbReference type="EC" id="2.7.7.23" evidence="1"/>
<dbReference type="EC" id="2.3.1.157" evidence="1"/>
<dbReference type="EMBL" id="CP000854">
    <property type="protein sequence ID" value="ACC42874.1"/>
    <property type="molecule type" value="Genomic_DNA"/>
</dbReference>
<dbReference type="RefSeq" id="WP_012396021.1">
    <property type="nucleotide sequence ID" value="NC_010612.1"/>
</dbReference>
<dbReference type="SMR" id="B2HDJ0"/>
<dbReference type="STRING" id="216594.MMAR_4467"/>
<dbReference type="KEGG" id="mmi:MMAR_4467"/>
<dbReference type="eggNOG" id="COG1207">
    <property type="taxonomic scope" value="Bacteria"/>
</dbReference>
<dbReference type="HOGENOM" id="CLU_029499_15_2_11"/>
<dbReference type="OrthoDB" id="9775031at2"/>
<dbReference type="UniPathway" id="UPA00113">
    <property type="reaction ID" value="UER00532"/>
</dbReference>
<dbReference type="UniPathway" id="UPA00113">
    <property type="reaction ID" value="UER00533"/>
</dbReference>
<dbReference type="UniPathway" id="UPA00973"/>
<dbReference type="Proteomes" id="UP000001190">
    <property type="component" value="Chromosome"/>
</dbReference>
<dbReference type="GO" id="GO:0005737">
    <property type="term" value="C:cytoplasm"/>
    <property type="evidence" value="ECO:0007669"/>
    <property type="project" value="UniProtKB-SubCell"/>
</dbReference>
<dbReference type="GO" id="GO:0016020">
    <property type="term" value="C:membrane"/>
    <property type="evidence" value="ECO:0007669"/>
    <property type="project" value="GOC"/>
</dbReference>
<dbReference type="GO" id="GO:0019134">
    <property type="term" value="F:glucosamine-1-phosphate N-acetyltransferase activity"/>
    <property type="evidence" value="ECO:0007669"/>
    <property type="project" value="UniProtKB-UniRule"/>
</dbReference>
<dbReference type="GO" id="GO:0000287">
    <property type="term" value="F:magnesium ion binding"/>
    <property type="evidence" value="ECO:0007669"/>
    <property type="project" value="UniProtKB-UniRule"/>
</dbReference>
<dbReference type="GO" id="GO:0003977">
    <property type="term" value="F:UDP-N-acetylglucosamine diphosphorylase activity"/>
    <property type="evidence" value="ECO:0007669"/>
    <property type="project" value="UniProtKB-UniRule"/>
</dbReference>
<dbReference type="GO" id="GO:0000902">
    <property type="term" value="P:cell morphogenesis"/>
    <property type="evidence" value="ECO:0007669"/>
    <property type="project" value="UniProtKB-UniRule"/>
</dbReference>
<dbReference type="GO" id="GO:0071555">
    <property type="term" value="P:cell wall organization"/>
    <property type="evidence" value="ECO:0007669"/>
    <property type="project" value="UniProtKB-KW"/>
</dbReference>
<dbReference type="GO" id="GO:0009245">
    <property type="term" value="P:lipid A biosynthetic process"/>
    <property type="evidence" value="ECO:0007669"/>
    <property type="project" value="UniProtKB-UniRule"/>
</dbReference>
<dbReference type="GO" id="GO:0009252">
    <property type="term" value="P:peptidoglycan biosynthetic process"/>
    <property type="evidence" value="ECO:0007669"/>
    <property type="project" value="UniProtKB-UniRule"/>
</dbReference>
<dbReference type="GO" id="GO:0008360">
    <property type="term" value="P:regulation of cell shape"/>
    <property type="evidence" value="ECO:0007669"/>
    <property type="project" value="UniProtKB-KW"/>
</dbReference>
<dbReference type="GO" id="GO:0006048">
    <property type="term" value="P:UDP-N-acetylglucosamine biosynthetic process"/>
    <property type="evidence" value="ECO:0007669"/>
    <property type="project" value="UniProtKB-UniPathway"/>
</dbReference>
<dbReference type="CDD" id="cd02540">
    <property type="entry name" value="GT2_GlmU_N_bac"/>
    <property type="match status" value="1"/>
</dbReference>
<dbReference type="CDD" id="cd03353">
    <property type="entry name" value="LbH_GlmU_C"/>
    <property type="match status" value="1"/>
</dbReference>
<dbReference type="Gene3D" id="2.160.10.10">
    <property type="entry name" value="Hexapeptide repeat proteins"/>
    <property type="match status" value="1"/>
</dbReference>
<dbReference type="Gene3D" id="3.90.550.10">
    <property type="entry name" value="Spore Coat Polysaccharide Biosynthesis Protein SpsA, Chain A"/>
    <property type="match status" value="1"/>
</dbReference>
<dbReference type="HAMAP" id="MF_01631">
    <property type="entry name" value="GlmU"/>
    <property type="match status" value="1"/>
</dbReference>
<dbReference type="InterPro" id="IPR005882">
    <property type="entry name" value="Bifunctional_GlmU"/>
</dbReference>
<dbReference type="InterPro" id="IPR050065">
    <property type="entry name" value="GlmU-like"/>
</dbReference>
<dbReference type="InterPro" id="IPR038009">
    <property type="entry name" value="GlmU_C_LbH"/>
</dbReference>
<dbReference type="InterPro" id="IPR001451">
    <property type="entry name" value="Hexapep"/>
</dbReference>
<dbReference type="InterPro" id="IPR025877">
    <property type="entry name" value="MobA-like_NTP_Trfase"/>
</dbReference>
<dbReference type="InterPro" id="IPR029044">
    <property type="entry name" value="Nucleotide-diphossugar_trans"/>
</dbReference>
<dbReference type="InterPro" id="IPR011004">
    <property type="entry name" value="Trimer_LpxA-like_sf"/>
</dbReference>
<dbReference type="NCBIfam" id="TIGR01173">
    <property type="entry name" value="glmU"/>
    <property type="match status" value="1"/>
</dbReference>
<dbReference type="NCBIfam" id="NF010932">
    <property type="entry name" value="PRK14352.1"/>
    <property type="match status" value="1"/>
</dbReference>
<dbReference type="PANTHER" id="PTHR43584:SF3">
    <property type="entry name" value="BIFUNCTIONAL PROTEIN GLMU"/>
    <property type="match status" value="1"/>
</dbReference>
<dbReference type="PANTHER" id="PTHR43584">
    <property type="entry name" value="NUCLEOTIDYL TRANSFERASE"/>
    <property type="match status" value="1"/>
</dbReference>
<dbReference type="Pfam" id="PF00132">
    <property type="entry name" value="Hexapep"/>
    <property type="match status" value="1"/>
</dbReference>
<dbReference type="Pfam" id="PF12804">
    <property type="entry name" value="NTP_transf_3"/>
    <property type="match status" value="1"/>
</dbReference>
<dbReference type="SUPFAM" id="SSF53448">
    <property type="entry name" value="Nucleotide-diphospho-sugar transferases"/>
    <property type="match status" value="1"/>
</dbReference>
<dbReference type="SUPFAM" id="SSF51161">
    <property type="entry name" value="Trimeric LpxA-like enzymes"/>
    <property type="match status" value="1"/>
</dbReference>
<evidence type="ECO:0000255" key="1">
    <source>
        <dbReference type="HAMAP-Rule" id="MF_01631"/>
    </source>
</evidence>
<evidence type="ECO:0000256" key="2">
    <source>
        <dbReference type="SAM" id="MobiDB-lite"/>
    </source>
</evidence>
<feature type="chain" id="PRO_1000186468" description="Bifunctional protein GlmU">
    <location>
        <begin position="1"/>
        <end position="492"/>
    </location>
</feature>
<feature type="region of interest" description="Pyrophosphorylase" evidence="1">
    <location>
        <begin position="1"/>
        <end position="241"/>
    </location>
</feature>
<feature type="region of interest" description="Linker" evidence="1">
    <location>
        <begin position="242"/>
        <end position="262"/>
    </location>
</feature>
<feature type="region of interest" description="N-acetyltransferase" evidence="1">
    <location>
        <begin position="263"/>
        <end position="492"/>
    </location>
</feature>
<feature type="region of interest" description="Disordered" evidence="2">
    <location>
        <begin position="451"/>
        <end position="492"/>
    </location>
</feature>
<feature type="compositionally biased region" description="Pro residues" evidence="2">
    <location>
        <begin position="483"/>
        <end position="492"/>
    </location>
</feature>
<feature type="active site" description="Proton acceptor" evidence="1">
    <location>
        <position position="374"/>
    </location>
</feature>
<feature type="binding site" evidence="1">
    <location>
        <begin position="12"/>
        <end position="15"/>
    </location>
    <ligand>
        <name>UDP-N-acetyl-alpha-D-glucosamine</name>
        <dbReference type="ChEBI" id="CHEBI:57705"/>
    </ligand>
</feature>
<feature type="binding site" evidence="1">
    <location>
        <position position="26"/>
    </location>
    <ligand>
        <name>UDP-N-acetyl-alpha-D-glucosamine</name>
        <dbReference type="ChEBI" id="CHEBI:57705"/>
    </ligand>
</feature>
<feature type="binding site" evidence="1">
    <location>
        <position position="83"/>
    </location>
    <ligand>
        <name>UDP-N-acetyl-alpha-D-glucosamine</name>
        <dbReference type="ChEBI" id="CHEBI:57705"/>
    </ligand>
</feature>
<feature type="binding site" evidence="1">
    <location>
        <begin position="88"/>
        <end position="89"/>
    </location>
    <ligand>
        <name>UDP-N-acetyl-alpha-D-glucosamine</name>
        <dbReference type="ChEBI" id="CHEBI:57705"/>
    </ligand>
</feature>
<feature type="binding site" evidence="1">
    <location>
        <position position="114"/>
    </location>
    <ligand>
        <name>Mg(2+)</name>
        <dbReference type="ChEBI" id="CHEBI:18420"/>
    </ligand>
</feature>
<feature type="binding site" evidence="1">
    <location>
        <position position="151"/>
    </location>
    <ligand>
        <name>UDP-N-acetyl-alpha-D-glucosamine</name>
        <dbReference type="ChEBI" id="CHEBI:57705"/>
    </ligand>
</feature>
<feature type="binding site" evidence="1">
    <location>
        <position position="166"/>
    </location>
    <ligand>
        <name>UDP-N-acetyl-alpha-D-glucosamine</name>
        <dbReference type="ChEBI" id="CHEBI:57705"/>
    </ligand>
</feature>
<feature type="binding site" evidence="1">
    <location>
        <position position="181"/>
    </location>
    <ligand>
        <name>UDP-N-acetyl-alpha-D-glucosamine</name>
        <dbReference type="ChEBI" id="CHEBI:57705"/>
    </ligand>
</feature>
<feature type="binding site" evidence="1">
    <location>
        <position position="239"/>
    </location>
    <ligand>
        <name>Mg(2+)</name>
        <dbReference type="ChEBI" id="CHEBI:18420"/>
    </ligand>
</feature>
<feature type="binding site" evidence="1">
    <location>
        <position position="239"/>
    </location>
    <ligand>
        <name>UDP-N-acetyl-alpha-D-glucosamine</name>
        <dbReference type="ChEBI" id="CHEBI:57705"/>
    </ligand>
</feature>
<feature type="binding site" evidence="1">
    <location>
        <position position="344"/>
    </location>
    <ligand>
        <name>UDP-N-acetyl-alpha-D-glucosamine</name>
        <dbReference type="ChEBI" id="CHEBI:57705"/>
    </ligand>
</feature>
<feature type="binding site" evidence="1">
    <location>
        <position position="362"/>
    </location>
    <ligand>
        <name>UDP-N-acetyl-alpha-D-glucosamine</name>
        <dbReference type="ChEBI" id="CHEBI:57705"/>
    </ligand>
</feature>
<feature type="binding site" evidence="1">
    <location>
        <position position="377"/>
    </location>
    <ligand>
        <name>UDP-N-acetyl-alpha-D-glucosamine</name>
        <dbReference type="ChEBI" id="CHEBI:57705"/>
    </ligand>
</feature>
<feature type="binding site" evidence="1">
    <location>
        <position position="388"/>
    </location>
    <ligand>
        <name>UDP-N-acetyl-alpha-D-glucosamine</name>
        <dbReference type="ChEBI" id="CHEBI:57705"/>
    </ligand>
</feature>
<feature type="binding site" evidence="1">
    <location>
        <position position="391"/>
    </location>
    <ligand>
        <name>acetyl-CoA</name>
        <dbReference type="ChEBI" id="CHEBI:57288"/>
    </ligand>
</feature>
<feature type="binding site" evidence="1">
    <location>
        <begin position="397"/>
        <end position="398"/>
    </location>
    <ligand>
        <name>acetyl-CoA</name>
        <dbReference type="ChEBI" id="CHEBI:57288"/>
    </ligand>
</feature>
<feature type="binding site" evidence="1">
    <location>
        <position position="434"/>
    </location>
    <ligand>
        <name>acetyl-CoA</name>
        <dbReference type="ChEBI" id="CHEBI:57288"/>
    </ligand>
</feature>
<gene>
    <name evidence="1" type="primary">glmU</name>
    <name type="ordered locus">MMAR_4467</name>
</gene>
<organism>
    <name type="scientific">Mycobacterium marinum (strain ATCC BAA-535 / M)</name>
    <dbReference type="NCBI Taxonomy" id="216594"/>
    <lineage>
        <taxon>Bacteria</taxon>
        <taxon>Bacillati</taxon>
        <taxon>Actinomycetota</taxon>
        <taxon>Actinomycetes</taxon>
        <taxon>Mycobacteriales</taxon>
        <taxon>Mycobacteriaceae</taxon>
        <taxon>Mycobacterium</taxon>
        <taxon>Mycobacterium ulcerans group</taxon>
    </lineage>
</organism>
<comment type="function">
    <text evidence="1">Catalyzes the last two sequential reactions in the de novo biosynthetic pathway for UDP-N-acetylglucosamine (UDP-GlcNAc). The C-terminal domain catalyzes the transfer of acetyl group from acetyl coenzyme A to glucosamine-1-phosphate (GlcN-1-P) to produce N-acetylglucosamine-1-phosphate (GlcNAc-1-P), which is converted into UDP-GlcNAc by the transfer of uridine 5-monophosphate (from uridine 5-triphosphate), a reaction catalyzed by the N-terminal domain.</text>
</comment>
<comment type="catalytic activity">
    <reaction evidence="1">
        <text>alpha-D-glucosamine 1-phosphate + acetyl-CoA = N-acetyl-alpha-D-glucosamine 1-phosphate + CoA + H(+)</text>
        <dbReference type="Rhea" id="RHEA:13725"/>
        <dbReference type="ChEBI" id="CHEBI:15378"/>
        <dbReference type="ChEBI" id="CHEBI:57287"/>
        <dbReference type="ChEBI" id="CHEBI:57288"/>
        <dbReference type="ChEBI" id="CHEBI:57776"/>
        <dbReference type="ChEBI" id="CHEBI:58516"/>
        <dbReference type="EC" id="2.3.1.157"/>
    </reaction>
</comment>
<comment type="catalytic activity">
    <reaction evidence="1">
        <text>N-acetyl-alpha-D-glucosamine 1-phosphate + UTP + H(+) = UDP-N-acetyl-alpha-D-glucosamine + diphosphate</text>
        <dbReference type="Rhea" id="RHEA:13509"/>
        <dbReference type="ChEBI" id="CHEBI:15378"/>
        <dbReference type="ChEBI" id="CHEBI:33019"/>
        <dbReference type="ChEBI" id="CHEBI:46398"/>
        <dbReference type="ChEBI" id="CHEBI:57705"/>
        <dbReference type="ChEBI" id="CHEBI:57776"/>
        <dbReference type="EC" id="2.7.7.23"/>
    </reaction>
</comment>
<comment type="cofactor">
    <cofactor evidence="1">
        <name>Mg(2+)</name>
        <dbReference type="ChEBI" id="CHEBI:18420"/>
    </cofactor>
    <text evidence="1">Binds 1 Mg(2+) ion per subunit.</text>
</comment>
<comment type="pathway">
    <text evidence="1">Nucleotide-sugar biosynthesis; UDP-N-acetyl-alpha-D-glucosamine biosynthesis; N-acetyl-alpha-D-glucosamine 1-phosphate from alpha-D-glucosamine 6-phosphate (route II): step 2/2.</text>
</comment>
<comment type="pathway">
    <text evidence="1">Nucleotide-sugar biosynthesis; UDP-N-acetyl-alpha-D-glucosamine biosynthesis; UDP-N-acetyl-alpha-D-glucosamine from N-acetyl-alpha-D-glucosamine 1-phosphate: step 1/1.</text>
</comment>
<comment type="pathway">
    <text evidence="1">Bacterial outer membrane biogenesis; LPS lipid A biosynthesis.</text>
</comment>
<comment type="subunit">
    <text evidence="1">Homotrimer.</text>
</comment>
<comment type="subcellular location">
    <subcellularLocation>
        <location evidence="1">Cytoplasm</location>
    </subcellularLocation>
</comment>
<comment type="similarity">
    <text evidence="1">In the N-terminal section; belongs to the N-acetylglucosamine-1-phosphate uridyltransferase family.</text>
</comment>
<comment type="similarity">
    <text evidence="1">In the C-terminal section; belongs to the transferase hexapeptide repeat family.</text>
</comment>
<sequence>MTFRGDTAVVVLAAGAGTRMRSDIPKVLHTLAGRSMLSHSLHAMAKLAPQHLVVVLGHCHERISPLVDELAESLGRTINVTLQDRPLGTGDAVRCGLSALPADYSGIVVVTAGDTPLLDAETLADLIETHSATSSAVTVLTTTLSDPHGYGRILRTQDNAVMAIVEQTDATPSQREIREVNAGVYAFEITALQSALSRLSSDNAQQELYLPDVIAILRRDGQTVSARHIDDSALVAGVNDRVQLAQLGAELNRRIVAAHQMAGVTVIDPATTWIDVDVAIGRDTVIQPGTQLLGHTQIGDRCEIGPDTTLTDVTVGDNASVVRTHGSSSSIGAAAAVGPFTFLRPGTVLGTGGKLGAFVETKNSTIGAGTKVPHLTYVGDADIGDDSNIGAGSVFVNYDGMTKNRATIGSHVRSGAGTRFVAPVNVGDGAYTGAGTVIRDDVPPGALAVSGGPQRNIEDWVQQKRPGTPSAEAARKASAEQSTPPPDADQTP</sequence>
<protein>
    <recommendedName>
        <fullName evidence="1">Bifunctional protein GlmU</fullName>
    </recommendedName>
    <domain>
        <recommendedName>
            <fullName evidence="1">UDP-N-acetylglucosamine pyrophosphorylase</fullName>
            <ecNumber evidence="1">2.7.7.23</ecNumber>
        </recommendedName>
        <alternativeName>
            <fullName evidence="1">N-acetylglucosamine-1-phosphate uridyltransferase</fullName>
        </alternativeName>
    </domain>
    <domain>
        <recommendedName>
            <fullName evidence="1">Glucosamine-1-phosphate N-acetyltransferase</fullName>
            <ecNumber evidence="1">2.3.1.157</ecNumber>
        </recommendedName>
    </domain>
</protein>
<name>GLMU_MYCMM</name>
<accession>B2HDJ0</accession>
<proteinExistence type="inferred from homology"/>
<reference key="1">
    <citation type="journal article" date="2008" name="Genome Res.">
        <title>Insights from the complete genome sequence of Mycobacterium marinum on the evolution of Mycobacterium tuberculosis.</title>
        <authorList>
            <person name="Stinear T.P."/>
            <person name="Seemann T."/>
            <person name="Harrison P.F."/>
            <person name="Jenkin G.A."/>
            <person name="Davies J.K."/>
            <person name="Johnson P.D."/>
            <person name="Abdellah Z."/>
            <person name="Arrowsmith C."/>
            <person name="Chillingworth T."/>
            <person name="Churcher C."/>
            <person name="Clarke K."/>
            <person name="Cronin A."/>
            <person name="Davis P."/>
            <person name="Goodhead I."/>
            <person name="Holroyd N."/>
            <person name="Jagels K."/>
            <person name="Lord A."/>
            <person name="Moule S."/>
            <person name="Mungall K."/>
            <person name="Norbertczak H."/>
            <person name="Quail M.A."/>
            <person name="Rabbinowitsch E."/>
            <person name="Walker D."/>
            <person name="White B."/>
            <person name="Whitehead S."/>
            <person name="Small P.L."/>
            <person name="Brosch R."/>
            <person name="Ramakrishnan L."/>
            <person name="Fischbach M.A."/>
            <person name="Parkhill J."/>
            <person name="Cole S.T."/>
        </authorList>
    </citation>
    <scope>NUCLEOTIDE SEQUENCE [LARGE SCALE GENOMIC DNA]</scope>
    <source>
        <strain>ATCC BAA-535 / M</strain>
    </source>
</reference>
<keyword id="KW-0012">Acyltransferase</keyword>
<keyword id="KW-0133">Cell shape</keyword>
<keyword id="KW-0961">Cell wall biogenesis/degradation</keyword>
<keyword id="KW-0963">Cytoplasm</keyword>
<keyword id="KW-0460">Magnesium</keyword>
<keyword id="KW-0479">Metal-binding</keyword>
<keyword id="KW-0511">Multifunctional enzyme</keyword>
<keyword id="KW-0548">Nucleotidyltransferase</keyword>
<keyword id="KW-0573">Peptidoglycan synthesis</keyword>
<keyword id="KW-1185">Reference proteome</keyword>
<keyword id="KW-0677">Repeat</keyword>
<keyword id="KW-0808">Transferase</keyword>